<proteinExistence type="inferred from homology"/>
<protein>
    <recommendedName>
        <fullName evidence="1">A-type ATP synthase subunit B</fullName>
    </recommendedName>
</protein>
<feature type="chain" id="PRO_0000144655" description="A-type ATP synthase subunit B">
    <location>
        <begin position="1"/>
        <end position="460"/>
    </location>
</feature>
<comment type="function">
    <text evidence="1">Component of the A-type ATP synthase that produces ATP from ADP in the presence of a proton gradient across the membrane. The B chain is a regulatory subunit.</text>
</comment>
<comment type="subunit">
    <text evidence="1">Has multiple subunits with at least A(3), B(3), C, D, E, F, H, I and proteolipid K(x).</text>
</comment>
<comment type="subcellular location">
    <subcellularLocation>
        <location evidence="1">Cell membrane</location>
        <topology evidence="1">Peripheral membrane protein</topology>
    </subcellularLocation>
</comment>
<comment type="similarity">
    <text evidence="1">Belongs to the ATPase alpha/beta chains family.</text>
</comment>
<organism>
    <name type="scientific">Methanosarcina barkeri</name>
    <dbReference type="NCBI Taxonomy" id="2208"/>
    <lineage>
        <taxon>Archaea</taxon>
        <taxon>Methanobacteriati</taxon>
        <taxon>Methanobacteriota</taxon>
        <taxon>Stenosarchaea group</taxon>
        <taxon>Methanomicrobia</taxon>
        <taxon>Methanosarcinales</taxon>
        <taxon>Methanosarcinaceae</taxon>
        <taxon>Methanosarcina</taxon>
    </lineage>
</organism>
<gene>
    <name evidence="1" type="primary">atpB</name>
</gene>
<reference key="1">
    <citation type="journal article" date="1989" name="J. Biol. Chem.">
        <title>Amino acid sequence of the alpha and beta subunits of Methanosarcina barkeri ATPase deduced from cloned genes. Similarity to subunits of eukaryotic vacuolar and F0F1-ATPases.</title>
        <authorList>
            <person name="Inatomi K."/>
            <person name="Eya S."/>
            <person name="Maeda M."/>
            <person name="Futai M."/>
        </authorList>
    </citation>
    <scope>NUCLEOTIDE SEQUENCE [GENOMIC DNA]</scope>
</reference>
<keyword id="KW-0066">ATP synthesis</keyword>
<keyword id="KW-1003">Cell membrane</keyword>
<keyword id="KW-0375">Hydrogen ion transport</keyword>
<keyword id="KW-0406">Ion transport</keyword>
<keyword id="KW-0472">Membrane</keyword>
<keyword id="KW-0813">Transport</keyword>
<sequence>MVKEYKTITQIAGPLVFVEKTEPVGYKEIVTINLPDGTTRRGEVLDSSSDIVVIQIFEGTTGLDKECGVVFTGETLKLPASIDLLGRILSGSGEPLDGGPRIVPDQLLDINGAAMNPYARLPPKDFIQTGISTIDGTNTLVRGQKLPIFSASGLPHNEIALQIARQAAVPGSESAFAVVFAAMGITNEEAQYFMSDFEKTGALERAVVFLNLADDPAVERIVTPRMALTAAEYLAYEHGMHVLVILTDITNYAEALRQMGAARNEIPGRRGYPGYMYTDLATLYERAGIVKGAKGSVTQIPILSMPGDDITHPIPDLSGYITEGQIVVSRELHRKGIYPPINVLPSLSRLMNSGIGAGKTREDHKAVSDQMYAGYAEGRDLRGLVAIVGKEALSERDVKFLEFADLFEQQFVTQGRNENRTIADTLDIGWKILAHLPENQLGRIDNKYIQKYHPAHRKGQ</sequence>
<evidence type="ECO:0000255" key="1">
    <source>
        <dbReference type="HAMAP-Rule" id="MF_00310"/>
    </source>
</evidence>
<dbReference type="EMBL" id="J04836">
    <property type="protein sequence ID" value="AAA72216.1"/>
    <property type="molecule type" value="Genomic_DNA"/>
</dbReference>
<dbReference type="PIR" id="B34283">
    <property type="entry name" value="B34283"/>
</dbReference>
<dbReference type="SMR" id="P22663"/>
<dbReference type="GO" id="GO:0005886">
    <property type="term" value="C:plasma membrane"/>
    <property type="evidence" value="ECO:0007669"/>
    <property type="project" value="UniProtKB-SubCell"/>
</dbReference>
<dbReference type="GO" id="GO:0033178">
    <property type="term" value="C:proton-transporting two-sector ATPase complex, catalytic domain"/>
    <property type="evidence" value="ECO:0007669"/>
    <property type="project" value="InterPro"/>
</dbReference>
<dbReference type="GO" id="GO:0005524">
    <property type="term" value="F:ATP binding"/>
    <property type="evidence" value="ECO:0007669"/>
    <property type="project" value="UniProtKB-UniRule"/>
</dbReference>
<dbReference type="GO" id="GO:0046933">
    <property type="term" value="F:proton-transporting ATP synthase activity, rotational mechanism"/>
    <property type="evidence" value="ECO:0007669"/>
    <property type="project" value="UniProtKB-UniRule"/>
</dbReference>
<dbReference type="GO" id="GO:0042777">
    <property type="term" value="P:proton motive force-driven plasma membrane ATP synthesis"/>
    <property type="evidence" value="ECO:0007669"/>
    <property type="project" value="UniProtKB-UniRule"/>
</dbReference>
<dbReference type="CDD" id="cd18112">
    <property type="entry name" value="ATP-synt_V_A-type_beta_C"/>
    <property type="match status" value="1"/>
</dbReference>
<dbReference type="CDD" id="cd18118">
    <property type="entry name" value="ATP-synt_V_A-type_beta_N"/>
    <property type="match status" value="1"/>
</dbReference>
<dbReference type="CDD" id="cd01135">
    <property type="entry name" value="V_A-ATPase_B"/>
    <property type="match status" value="1"/>
</dbReference>
<dbReference type="Gene3D" id="3.40.50.12240">
    <property type="match status" value="1"/>
</dbReference>
<dbReference type="HAMAP" id="MF_00310">
    <property type="entry name" value="ATP_synth_B_arch"/>
    <property type="match status" value="1"/>
</dbReference>
<dbReference type="InterPro" id="IPR055190">
    <property type="entry name" value="ATP-synt_VA_C"/>
</dbReference>
<dbReference type="InterPro" id="IPR020003">
    <property type="entry name" value="ATPase_a/bsu_AS"/>
</dbReference>
<dbReference type="InterPro" id="IPR005724">
    <property type="entry name" value="ATPase_A1-cplx_bsu"/>
</dbReference>
<dbReference type="InterPro" id="IPR004100">
    <property type="entry name" value="ATPase_F1/V1/A1_a/bsu_N"/>
</dbReference>
<dbReference type="InterPro" id="IPR000194">
    <property type="entry name" value="ATPase_F1/V1/A1_a/bsu_nucl-bd"/>
</dbReference>
<dbReference type="InterPro" id="IPR027417">
    <property type="entry name" value="P-loop_NTPase"/>
</dbReference>
<dbReference type="InterPro" id="IPR022879">
    <property type="entry name" value="V-ATPase_su_B/beta"/>
</dbReference>
<dbReference type="NCBIfam" id="TIGR01041">
    <property type="entry name" value="ATP_syn_B_arch"/>
    <property type="match status" value="1"/>
</dbReference>
<dbReference type="NCBIfam" id="NF003235">
    <property type="entry name" value="PRK04196.1"/>
    <property type="match status" value="1"/>
</dbReference>
<dbReference type="PANTHER" id="PTHR43389">
    <property type="entry name" value="V-TYPE PROTON ATPASE SUBUNIT B"/>
    <property type="match status" value="1"/>
</dbReference>
<dbReference type="PANTHER" id="PTHR43389:SF4">
    <property type="entry name" value="V-TYPE PROTON ATPASE SUBUNIT B"/>
    <property type="match status" value="1"/>
</dbReference>
<dbReference type="Pfam" id="PF00006">
    <property type="entry name" value="ATP-synt_ab"/>
    <property type="match status" value="1"/>
</dbReference>
<dbReference type="Pfam" id="PF02874">
    <property type="entry name" value="ATP-synt_ab_N"/>
    <property type="match status" value="1"/>
</dbReference>
<dbReference type="Pfam" id="PF22919">
    <property type="entry name" value="ATP-synt_VA_C"/>
    <property type="match status" value="1"/>
</dbReference>
<dbReference type="PIRSF" id="PIRSF039114">
    <property type="entry name" value="V-ATPsynth_beta/V-ATPase_B"/>
    <property type="match status" value="1"/>
</dbReference>
<dbReference type="SUPFAM" id="SSF47917">
    <property type="entry name" value="C-terminal domain of alpha and beta subunits of F1 ATP synthase"/>
    <property type="match status" value="1"/>
</dbReference>
<dbReference type="SUPFAM" id="SSF52540">
    <property type="entry name" value="P-loop containing nucleoside triphosphate hydrolases"/>
    <property type="match status" value="1"/>
</dbReference>
<dbReference type="PROSITE" id="PS00152">
    <property type="entry name" value="ATPASE_ALPHA_BETA"/>
    <property type="match status" value="1"/>
</dbReference>
<name>AATB_METBA</name>
<accession>P22663</accession>